<dbReference type="EC" id="4.2.1.11" evidence="1"/>
<dbReference type="EMBL" id="AP009153">
    <property type="protein sequence ID" value="BAH38343.1"/>
    <property type="molecule type" value="Genomic_DNA"/>
</dbReference>
<dbReference type="RefSeq" id="WP_012682790.1">
    <property type="nucleotide sequence ID" value="NC_012489.1"/>
</dbReference>
<dbReference type="SMR" id="C1A7Y3"/>
<dbReference type="STRING" id="379066.GAU_1301"/>
<dbReference type="KEGG" id="gau:GAU_1301"/>
<dbReference type="eggNOG" id="COG0148">
    <property type="taxonomic scope" value="Bacteria"/>
</dbReference>
<dbReference type="HOGENOM" id="CLU_031223_2_1_0"/>
<dbReference type="OrthoDB" id="9804716at2"/>
<dbReference type="UniPathway" id="UPA00109">
    <property type="reaction ID" value="UER00187"/>
</dbReference>
<dbReference type="Proteomes" id="UP000002209">
    <property type="component" value="Chromosome"/>
</dbReference>
<dbReference type="GO" id="GO:0009986">
    <property type="term" value="C:cell surface"/>
    <property type="evidence" value="ECO:0007669"/>
    <property type="project" value="UniProtKB-SubCell"/>
</dbReference>
<dbReference type="GO" id="GO:0005576">
    <property type="term" value="C:extracellular region"/>
    <property type="evidence" value="ECO:0007669"/>
    <property type="project" value="UniProtKB-SubCell"/>
</dbReference>
<dbReference type="GO" id="GO:0000015">
    <property type="term" value="C:phosphopyruvate hydratase complex"/>
    <property type="evidence" value="ECO:0007669"/>
    <property type="project" value="InterPro"/>
</dbReference>
<dbReference type="GO" id="GO:0000287">
    <property type="term" value="F:magnesium ion binding"/>
    <property type="evidence" value="ECO:0007669"/>
    <property type="project" value="UniProtKB-UniRule"/>
</dbReference>
<dbReference type="GO" id="GO:0004634">
    <property type="term" value="F:phosphopyruvate hydratase activity"/>
    <property type="evidence" value="ECO:0007669"/>
    <property type="project" value="UniProtKB-UniRule"/>
</dbReference>
<dbReference type="GO" id="GO:0006096">
    <property type="term" value="P:glycolytic process"/>
    <property type="evidence" value="ECO:0007669"/>
    <property type="project" value="UniProtKB-UniRule"/>
</dbReference>
<dbReference type="CDD" id="cd03313">
    <property type="entry name" value="enolase"/>
    <property type="match status" value="1"/>
</dbReference>
<dbReference type="FunFam" id="3.20.20.120:FF:000001">
    <property type="entry name" value="Enolase"/>
    <property type="match status" value="1"/>
</dbReference>
<dbReference type="FunFam" id="3.30.390.10:FF:000001">
    <property type="entry name" value="Enolase"/>
    <property type="match status" value="1"/>
</dbReference>
<dbReference type="Gene3D" id="3.20.20.120">
    <property type="entry name" value="Enolase-like C-terminal domain"/>
    <property type="match status" value="1"/>
</dbReference>
<dbReference type="Gene3D" id="3.30.390.10">
    <property type="entry name" value="Enolase-like, N-terminal domain"/>
    <property type="match status" value="1"/>
</dbReference>
<dbReference type="HAMAP" id="MF_00318">
    <property type="entry name" value="Enolase"/>
    <property type="match status" value="1"/>
</dbReference>
<dbReference type="InterPro" id="IPR000941">
    <property type="entry name" value="Enolase"/>
</dbReference>
<dbReference type="InterPro" id="IPR036849">
    <property type="entry name" value="Enolase-like_C_sf"/>
</dbReference>
<dbReference type="InterPro" id="IPR029017">
    <property type="entry name" value="Enolase-like_N"/>
</dbReference>
<dbReference type="InterPro" id="IPR020810">
    <property type="entry name" value="Enolase_C"/>
</dbReference>
<dbReference type="InterPro" id="IPR020809">
    <property type="entry name" value="Enolase_CS"/>
</dbReference>
<dbReference type="InterPro" id="IPR020811">
    <property type="entry name" value="Enolase_N"/>
</dbReference>
<dbReference type="NCBIfam" id="TIGR01060">
    <property type="entry name" value="eno"/>
    <property type="match status" value="1"/>
</dbReference>
<dbReference type="PANTHER" id="PTHR11902">
    <property type="entry name" value="ENOLASE"/>
    <property type="match status" value="1"/>
</dbReference>
<dbReference type="PANTHER" id="PTHR11902:SF1">
    <property type="entry name" value="ENOLASE"/>
    <property type="match status" value="1"/>
</dbReference>
<dbReference type="Pfam" id="PF00113">
    <property type="entry name" value="Enolase_C"/>
    <property type="match status" value="1"/>
</dbReference>
<dbReference type="Pfam" id="PF03952">
    <property type="entry name" value="Enolase_N"/>
    <property type="match status" value="1"/>
</dbReference>
<dbReference type="PIRSF" id="PIRSF001400">
    <property type="entry name" value="Enolase"/>
    <property type="match status" value="1"/>
</dbReference>
<dbReference type="PRINTS" id="PR00148">
    <property type="entry name" value="ENOLASE"/>
</dbReference>
<dbReference type="SFLD" id="SFLDF00002">
    <property type="entry name" value="enolase"/>
    <property type="match status" value="1"/>
</dbReference>
<dbReference type="SFLD" id="SFLDG00178">
    <property type="entry name" value="enolase"/>
    <property type="match status" value="1"/>
</dbReference>
<dbReference type="SMART" id="SM01192">
    <property type="entry name" value="Enolase_C"/>
    <property type="match status" value="1"/>
</dbReference>
<dbReference type="SMART" id="SM01193">
    <property type="entry name" value="Enolase_N"/>
    <property type="match status" value="1"/>
</dbReference>
<dbReference type="SUPFAM" id="SSF51604">
    <property type="entry name" value="Enolase C-terminal domain-like"/>
    <property type="match status" value="1"/>
</dbReference>
<dbReference type="SUPFAM" id="SSF54826">
    <property type="entry name" value="Enolase N-terminal domain-like"/>
    <property type="match status" value="1"/>
</dbReference>
<dbReference type="PROSITE" id="PS00164">
    <property type="entry name" value="ENOLASE"/>
    <property type="match status" value="1"/>
</dbReference>
<evidence type="ECO:0000255" key="1">
    <source>
        <dbReference type="HAMAP-Rule" id="MF_00318"/>
    </source>
</evidence>
<name>ENO_GEMAT</name>
<reference key="1">
    <citation type="submission" date="2006-03" db="EMBL/GenBank/DDBJ databases">
        <title>Complete genome sequence of Gemmatimonas aurantiaca T-27 that represents a novel phylum Gemmatimonadetes.</title>
        <authorList>
            <person name="Takasaki K."/>
            <person name="Ichikawa N."/>
            <person name="Miura H."/>
            <person name="Matsushita S."/>
            <person name="Watanabe Y."/>
            <person name="Oguchi A."/>
            <person name="Ankai A."/>
            <person name="Yashiro I."/>
            <person name="Takahashi M."/>
            <person name="Terui Y."/>
            <person name="Fukui S."/>
            <person name="Yokoyama H."/>
            <person name="Tanikawa S."/>
            <person name="Hanada S."/>
            <person name="Kamagata Y."/>
            <person name="Fujita N."/>
        </authorList>
    </citation>
    <scope>NUCLEOTIDE SEQUENCE [LARGE SCALE GENOMIC DNA]</scope>
    <source>
        <strain>DSM 14586 / JCM 11422 / NBRC 100505 / T-27</strain>
    </source>
</reference>
<gene>
    <name evidence="1" type="primary">eno</name>
    <name type="ordered locus">GAU_1301</name>
</gene>
<accession>C1A7Y3</accession>
<sequence>MASIVAVSAREILDSRGNPTVEVDVVLETGAAGRAAVPSGASTGEREAVELRDGDPARYGGKGVLNAVNNVNTEIAEALEDMDATDQIAVDRALLDLDGTENKGRLGANAMLGVSMAVARAAAFEVGLPLYRYLGGPMARTLPVPMMNILNGGAHATNTVDFQEFMIIPVGADSFADGLRMGTQVFHQLKKVLVSRKLSTGVGDEGGFAPNLASDEEALKVIIEAIEAAGFRPGQDIALALDVAASELFQNGQYHFKKSGAPSRSPKDMAEMYAGWLEQYPIVSIEDGMSENDWDGWKLLTEKIGDRCQLVGDDLFCTNSEILAKGIENDVANAILIKVNQIGTLTETFEAIELARSAGYNSVISHRSGETEDTFIADLAVATQAGQIKTGAPSRSDRVAKYNQLLRIEEQLEGYAEYPGGAIFGI</sequence>
<comment type="function">
    <text evidence="1">Catalyzes the reversible conversion of 2-phosphoglycerate (2-PG) into phosphoenolpyruvate (PEP). It is essential for the degradation of carbohydrates via glycolysis.</text>
</comment>
<comment type="catalytic activity">
    <reaction evidence="1">
        <text>(2R)-2-phosphoglycerate = phosphoenolpyruvate + H2O</text>
        <dbReference type="Rhea" id="RHEA:10164"/>
        <dbReference type="ChEBI" id="CHEBI:15377"/>
        <dbReference type="ChEBI" id="CHEBI:58289"/>
        <dbReference type="ChEBI" id="CHEBI:58702"/>
        <dbReference type="EC" id="4.2.1.11"/>
    </reaction>
</comment>
<comment type="cofactor">
    <cofactor evidence="1">
        <name>Mg(2+)</name>
        <dbReference type="ChEBI" id="CHEBI:18420"/>
    </cofactor>
    <text evidence="1">Binds a second Mg(2+) ion via substrate during catalysis.</text>
</comment>
<comment type="pathway">
    <text evidence="1">Carbohydrate degradation; glycolysis; pyruvate from D-glyceraldehyde 3-phosphate: step 4/5.</text>
</comment>
<comment type="subcellular location">
    <subcellularLocation>
        <location evidence="1">Cytoplasm</location>
    </subcellularLocation>
    <subcellularLocation>
        <location evidence="1">Secreted</location>
    </subcellularLocation>
    <subcellularLocation>
        <location evidence="1">Cell surface</location>
    </subcellularLocation>
    <text evidence="1">Fractions of enolase are present in both the cytoplasm and on the cell surface.</text>
</comment>
<comment type="similarity">
    <text evidence="1">Belongs to the enolase family.</text>
</comment>
<organism>
    <name type="scientific">Gemmatimonas aurantiaca (strain DSM 14586 / JCM 11422 / NBRC 100505 / T-27)</name>
    <dbReference type="NCBI Taxonomy" id="379066"/>
    <lineage>
        <taxon>Bacteria</taxon>
        <taxon>Pseudomonadati</taxon>
        <taxon>Gemmatimonadota</taxon>
        <taxon>Gemmatimonadia</taxon>
        <taxon>Gemmatimonadales</taxon>
        <taxon>Gemmatimonadaceae</taxon>
        <taxon>Gemmatimonas</taxon>
    </lineage>
</organism>
<proteinExistence type="inferred from homology"/>
<keyword id="KW-0963">Cytoplasm</keyword>
<keyword id="KW-0324">Glycolysis</keyword>
<keyword id="KW-0456">Lyase</keyword>
<keyword id="KW-0460">Magnesium</keyword>
<keyword id="KW-0479">Metal-binding</keyword>
<keyword id="KW-1185">Reference proteome</keyword>
<keyword id="KW-0964">Secreted</keyword>
<protein>
    <recommendedName>
        <fullName evidence="1">Enolase</fullName>
        <ecNumber evidence="1">4.2.1.11</ecNumber>
    </recommendedName>
    <alternativeName>
        <fullName evidence="1">2-phospho-D-glycerate hydro-lyase</fullName>
    </alternativeName>
    <alternativeName>
        <fullName evidence="1">2-phosphoglycerate dehydratase</fullName>
    </alternativeName>
</protein>
<feature type="chain" id="PRO_1000205095" description="Enolase">
    <location>
        <begin position="1"/>
        <end position="426"/>
    </location>
</feature>
<feature type="active site" description="Proton donor" evidence="1">
    <location>
        <position position="205"/>
    </location>
</feature>
<feature type="active site" description="Proton acceptor" evidence="1">
    <location>
        <position position="338"/>
    </location>
</feature>
<feature type="binding site" evidence="1">
    <location>
        <position position="163"/>
    </location>
    <ligand>
        <name>(2R)-2-phosphoglycerate</name>
        <dbReference type="ChEBI" id="CHEBI:58289"/>
    </ligand>
</feature>
<feature type="binding site" evidence="1">
    <location>
        <position position="242"/>
    </location>
    <ligand>
        <name>Mg(2+)</name>
        <dbReference type="ChEBI" id="CHEBI:18420"/>
    </ligand>
</feature>
<feature type="binding site" evidence="1">
    <location>
        <position position="286"/>
    </location>
    <ligand>
        <name>Mg(2+)</name>
        <dbReference type="ChEBI" id="CHEBI:18420"/>
    </ligand>
</feature>
<feature type="binding site" evidence="1">
    <location>
        <position position="313"/>
    </location>
    <ligand>
        <name>Mg(2+)</name>
        <dbReference type="ChEBI" id="CHEBI:18420"/>
    </ligand>
</feature>
<feature type="binding site" evidence="1">
    <location>
        <position position="338"/>
    </location>
    <ligand>
        <name>(2R)-2-phosphoglycerate</name>
        <dbReference type="ChEBI" id="CHEBI:58289"/>
    </ligand>
</feature>
<feature type="binding site" evidence="1">
    <location>
        <position position="367"/>
    </location>
    <ligand>
        <name>(2R)-2-phosphoglycerate</name>
        <dbReference type="ChEBI" id="CHEBI:58289"/>
    </ligand>
</feature>
<feature type="binding site" evidence="1">
    <location>
        <position position="368"/>
    </location>
    <ligand>
        <name>(2R)-2-phosphoglycerate</name>
        <dbReference type="ChEBI" id="CHEBI:58289"/>
    </ligand>
</feature>
<feature type="binding site" evidence="1">
    <location>
        <position position="389"/>
    </location>
    <ligand>
        <name>(2R)-2-phosphoglycerate</name>
        <dbReference type="ChEBI" id="CHEBI:58289"/>
    </ligand>
</feature>